<reference key="1">
    <citation type="journal article" date="2001" name="Genome Res.">
        <title>The complete genome sequence of the lactic acid bacterium Lactococcus lactis ssp. lactis IL1403.</title>
        <authorList>
            <person name="Bolotin A."/>
            <person name="Wincker P."/>
            <person name="Mauger S."/>
            <person name="Jaillon O."/>
            <person name="Malarme K."/>
            <person name="Weissenbach J."/>
            <person name="Ehrlich S.D."/>
            <person name="Sorokin A."/>
        </authorList>
    </citation>
    <scope>NUCLEOTIDE SEQUENCE [LARGE SCALE GENOMIC DNA]</scope>
    <source>
        <strain>IL1403</strain>
    </source>
</reference>
<gene>
    <name type="primary">yaiF</name>
    <name type="ordered locus">LL0082</name>
    <name type="ORF">L87100</name>
</gene>
<sequence length="218" mass="25414">MKFIFSKSIIIATAFFLFILSQLPAVFLNFLNSNGDTYGIAHKNTPPFIILTLVVVTICIFIGIKCGFYQNYRKSLEWKNILLIFSLLIITFFIQKFVVQFITSHNLYNVSHQITNQMKVENILSSLLFPGQFVAVSILAPILEESIYRACFYKLFGYYRWTFFLSCFFFSYVHSGFSWDILGYLPLSIALTYVYHRRQVLTDSILLHALFNTLLFVF</sequence>
<evidence type="ECO:0000255" key="1"/>
<evidence type="ECO:0000305" key="2"/>
<accession>Q9CJB5</accession>
<comment type="subcellular location">
    <subcellularLocation>
        <location evidence="2">Cell membrane</location>
        <topology evidence="2">Multi-pass membrane protein</topology>
    </subcellularLocation>
</comment>
<comment type="similarity">
    <text evidence="2">Belongs to the UPF0177 family.</text>
</comment>
<feature type="chain" id="PRO_0000220575" description="UPF0177 protein YaiF">
    <location>
        <begin position="1"/>
        <end position="218"/>
    </location>
</feature>
<feature type="transmembrane region" description="Helical" evidence="1">
    <location>
        <begin position="8"/>
        <end position="28"/>
    </location>
</feature>
<feature type="transmembrane region" description="Helical" evidence="1">
    <location>
        <begin position="48"/>
        <end position="68"/>
    </location>
</feature>
<feature type="transmembrane region" description="Helical" evidence="1">
    <location>
        <begin position="81"/>
        <end position="101"/>
    </location>
</feature>
<feature type="transmembrane region" description="Helical" evidence="1">
    <location>
        <begin position="123"/>
        <end position="143"/>
    </location>
</feature>
<feature type="transmembrane region" description="Helical" evidence="1">
    <location>
        <begin position="163"/>
        <end position="183"/>
    </location>
</feature>
<dbReference type="EMBL" id="AE005176">
    <property type="protein sequence ID" value="AAK04180.1"/>
    <property type="molecule type" value="Genomic_DNA"/>
</dbReference>
<dbReference type="PIR" id="B86635">
    <property type="entry name" value="B86635"/>
</dbReference>
<dbReference type="RefSeq" id="NP_266238.1">
    <property type="nucleotide sequence ID" value="NC_002662.1"/>
</dbReference>
<dbReference type="RefSeq" id="WP_010905097.1">
    <property type="nucleotide sequence ID" value="NC_002662.1"/>
</dbReference>
<dbReference type="PaxDb" id="272623-L87100"/>
<dbReference type="EnsemblBacteria" id="AAK04180">
    <property type="protein sequence ID" value="AAK04180"/>
    <property type="gene ID" value="L87100"/>
</dbReference>
<dbReference type="KEGG" id="lla:L87100"/>
<dbReference type="PATRIC" id="fig|272623.7.peg.92"/>
<dbReference type="eggNOG" id="COG1266">
    <property type="taxonomic scope" value="Bacteria"/>
</dbReference>
<dbReference type="HOGENOM" id="CLU_109309_0_0_9"/>
<dbReference type="OrthoDB" id="8607342at2"/>
<dbReference type="Proteomes" id="UP000002196">
    <property type="component" value="Chromosome"/>
</dbReference>
<dbReference type="GO" id="GO:0005886">
    <property type="term" value="C:plasma membrane"/>
    <property type="evidence" value="ECO:0007669"/>
    <property type="project" value="UniProtKB-SubCell"/>
</dbReference>
<dbReference type="GO" id="GO:0004175">
    <property type="term" value="F:endopeptidase activity"/>
    <property type="evidence" value="ECO:0007669"/>
    <property type="project" value="UniProtKB-ARBA"/>
</dbReference>
<dbReference type="GO" id="GO:0080120">
    <property type="term" value="P:CAAX-box protein maturation"/>
    <property type="evidence" value="ECO:0007669"/>
    <property type="project" value="UniProtKB-ARBA"/>
</dbReference>
<dbReference type="InterPro" id="IPR003675">
    <property type="entry name" value="Rce1/LyrA-like_dom"/>
</dbReference>
<dbReference type="Pfam" id="PF02517">
    <property type="entry name" value="Rce1-like"/>
    <property type="match status" value="1"/>
</dbReference>
<proteinExistence type="inferred from homology"/>
<name>YAIF_LACLA</name>
<keyword id="KW-1003">Cell membrane</keyword>
<keyword id="KW-0472">Membrane</keyword>
<keyword id="KW-1185">Reference proteome</keyword>
<keyword id="KW-0812">Transmembrane</keyword>
<keyword id="KW-1133">Transmembrane helix</keyword>
<protein>
    <recommendedName>
        <fullName>UPF0177 protein YaiF</fullName>
    </recommendedName>
</protein>
<organism>
    <name type="scientific">Lactococcus lactis subsp. lactis (strain IL1403)</name>
    <name type="common">Streptococcus lactis</name>
    <dbReference type="NCBI Taxonomy" id="272623"/>
    <lineage>
        <taxon>Bacteria</taxon>
        <taxon>Bacillati</taxon>
        <taxon>Bacillota</taxon>
        <taxon>Bacilli</taxon>
        <taxon>Lactobacillales</taxon>
        <taxon>Streptococcaceae</taxon>
        <taxon>Lactococcus</taxon>
    </lineage>
</organism>